<sequence length="294" mass="33090">MASFRRFRLLSPLKPCVTFGRMLYTRIDKDGLTMLAGHLAYVSLLSLVPLITVIFALFAAFPMFAEISIKLKAFIFANFMPATGDIIQNYLEQFVANSNRMTVVGTCGLIVTALLLIYSVDSVLNIIWRSKIQRSLVFSFAVYWMVLTLGPILVGASMVISSYLLSLHWLAHARVDSMIDEILRVFPLLISWVSFWLLYSVVPTVRVPARDALIGALVAALLFELGKKGFAMYITLFPSYQLIYGVLAVIPILFLWVYWSWCIVLLGAEITVTLGEYRAERHHAKSVTTQSPEM</sequence>
<feature type="chain" id="PRO_0000391065" description="UPF0761 membrane protein YPA_3514">
    <location>
        <begin position="1"/>
        <end position="294"/>
    </location>
</feature>
<feature type="transmembrane region" description="Helical" evidence="1">
    <location>
        <begin position="44"/>
        <end position="64"/>
    </location>
</feature>
<feature type="transmembrane region" description="Helical" evidence="1">
    <location>
        <begin position="67"/>
        <end position="87"/>
    </location>
</feature>
<feature type="transmembrane region" description="Helical" evidence="1">
    <location>
        <begin position="108"/>
        <end position="128"/>
    </location>
</feature>
<feature type="transmembrane region" description="Helical" evidence="1">
    <location>
        <begin position="136"/>
        <end position="156"/>
    </location>
</feature>
<feature type="transmembrane region" description="Helical" evidence="1">
    <location>
        <begin position="185"/>
        <end position="205"/>
    </location>
</feature>
<feature type="transmembrane region" description="Helical" evidence="1">
    <location>
        <begin position="212"/>
        <end position="232"/>
    </location>
</feature>
<feature type="transmembrane region" description="Helical" evidence="1">
    <location>
        <begin position="246"/>
        <end position="266"/>
    </location>
</feature>
<keyword id="KW-0997">Cell inner membrane</keyword>
<keyword id="KW-1003">Cell membrane</keyword>
<keyword id="KW-0472">Membrane</keyword>
<keyword id="KW-0812">Transmembrane</keyword>
<keyword id="KW-1133">Transmembrane helix</keyword>
<accession>Q1C246</accession>
<name>Y3514_YERPA</name>
<gene>
    <name type="ordered locus">YPA_3514</name>
</gene>
<evidence type="ECO:0000255" key="1">
    <source>
        <dbReference type="HAMAP-Rule" id="MF_00672"/>
    </source>
</evidence>
<evidence type="ECO:0000305" key="2"/>
<protein>
    <recommendedName>
        <fullName evidence="1">UPF0761 membrane protein YPA_3514</fullName>
    </recommendedName>
</protein>
<proteinExistence type="inferred from homology"/>
<comment type="subcellular location">
    <subcellularLocation>
        <location evidence="1">Cell inner membrane</location>
        <topology evidence="1">Multi-pass membrane protein</topology>
    </subcellularLocation>
</comment>
<comment type="similarity">
    <text evidence="1">Belongs to the UPF0761 family.</text>
</comment>
<comment type="sequence caution" evidence="2">
    <conflict type="erroneous initiation">
        <sequence resource="EMBL-CDS" id="ABG15476"/>
    </conflict>
</comment>
<organism>
    <name type="scientific">Yersinia pestis bv. Antiqua (strain Antiqua)</name>
    <dbReference type="NCBI Taxonomy" id="360102"/>
    <lineage>
        <taxon>Bacteria</taxon>
        <taxon>Pseudomonadati</taxon>
        <taxon>Pseudomonadota</taxon>
        <taxon>Gammaproteobacteria</taxon>
        <taxon>Enterobacterales</taxon>
        <taxon>Yersiniaceae</taxon>
        <taxon>Yersinia</taxon>
    </lineage>
</organism>
<reference key="1">
    <citation type="journal article" date="2006" name="J. Bacteriol.">
        <title>Complete genome sequence of Yersinia pestis strains Antiqua and Nepal516: evidence of gene reduction in an emerging pathogen.</title>
        <authorList>
            <person name="Chain P.S.G."/>
            <person name="Hu P."/>
            <person name="Malfatti S.A."/>
            <person name="Radnedge L."/>
            <person name="Larimer F."/>
            <person name="Vergez L.M."/>
            <person name="Worsham P."/>
            <person name="Chu M.C."/>
            <person name="Andersen G.L."/>
        </authorList>
    </citation>
    <scope>NUCLEOTIDE SEQUENCE [LARGE SCALE GENOMIC DNA]</scope>
    <source>
        <strain>Antiqua</strain>
    </source>
</reference>
<dbReference type="EMBL" id="CP000308">
    <property type="protein sequence ID" value="ABG15476.1"/>
    <property type="status" value="ALT_INIT"/>
    <property type="molecule type" value="Genomic_DNA"/>
</dbReference>
<dbReference type="RefSeq" id="WP_002209010.1">
    <property type="nucleotide sequence ID" value="NZ_CP009906.1"/>
</dbReference>
<dbReference type="KEGG" id="ypa:YPA_3514"/>
<dbReference type="Proteomes" id="UP000001971">
    <property type="component" value="Chromosome"/>
</dbReference>
<dbReference type="GO" id="GO:0005886">
    <property type="term" value="C:plasma membrane"/>
    <property type="evidence" value="ECO:0007669"/>
    <property type="project" value="UniProtKB-SubCell"/>
</dbReference>
<dbReference type="HAMAP" id="MF_00672">
    <property type="entry name" value="UPF0761"/>
    <property type="match status" value="1"/>
</dbReference>
<dbReference type="InterPro" id="IPR023679">
    <property type="entry name" value="UPF0761_bac"/>
</dbReference>
<dbReference type="InterPro" id="IPR017039">
    <property type="entry name" value="Virul_fac_BrkB"/>
</dbReference>
<dbReference type="NCBIfam" id="NF002457">
    <property type="entry name" value="PRK01637.1"/>
    <property type="match status" value="1"/>
</dbReference>
<dbReference type="NCBIfam" id="TIGR00765">
    <property type="entry name" value="yihY_not_rbn"/>
    <property type="match status" value="1"/>
</dbReference>
<dbReference type="PANTHER" id="PTHR30213">
    <property type="entry name" value="INNER MEMBRANE PROTEIN YHJD"/>
    <property type="match status" value="1"/>
</dbReference>
<dbReference type="PANTHER" id="PTHR30213:SF0">
    <property type="entry name" value="UPF0761 MEMBRANE PROTEIN YIHY"/>
    <property type="match status" value="1"/>
</dbReference>
<dbReference type="Pfam" id="PF03631">
    <property type="entry name" value="Virul_fac_BrkB"/>
    <property type="match status" value="1"/>
</dbReference>
<dbReference type="PIRSF" id="PIRSF035875">
    <property type="entry name" value="RNase_BN"/>
    <property type="match status" value="1"/>
</dbReference>